<accession>P66360</accession>
<accession>Q97ST8</accession>
<feature type="chain" id="PRO_0000123234" description="Small ribosomal subunit protein uS11">
    <location>
        <begin position="1"/>
        <end position="127"/>
    </location>
</feature>
<reference key="1">
    <citation type="journal article" date="2001" name="J. Bacteriol.">
        <title>Genome of the bacterium Streptococcus pneumoniae strain R6.</title>
        <authorList>
            <person name="Hoskins J."/>
            <person name="Alborn W.E. Jr."/>
            <person name="Arnold J."/>
            <person name="Blaszczak L.C."/>
            <person name="Burgett S."/>
            <person name="DeHoff B.S."/>
            <person name="Estrem S.T."/>
            <person name="Fritz L."/>
            <person name="Fu D.-J."/>
            <person name="Fuller W."/>
            <person name="Geringer C."/>
            <person name="Gilmour R."/>
            <person name="Glass J.S."/>
            <person name="Khoja H."/>
            <person name="Kraft A.R."/>
            <person name="Lagace R.E."/>
            <person name="LeBlanc D.J."/>
            <person name="Lee L.N."/>
            <person name="Lefkowitz E.J."/>
            <person name="Lu J."/>
            <person name="Matsushima P."/>
            <person name="McAhren S.M."/>
            <person name="McHenney M."/>
            <person name="McLeaster K."/>
            <person name="Mundy C.W."/>
            <person name="Nicas T.I."/>
            <person name="Norris F.H."/>
            <person name="O'Gara M."/>
            <person name="Peery R.B."/>
            <person name="Robertson G.T."/>
            <person name="Rockey P."/>
            <person name="Sun P.-M."/>
            <person name="Winkler M.E."/>
            <person name="Yang Y."/>
            <person name="Young-Bellido M."/>
            <person name="Zhao G."/>
            <person name="Zook C.A."/>
            <person name="Baltz R.H."/>
            <person name="Jaskunas S.R."/>
            <person name="Rosteck P.R. Jr."/>
            <person name="Skatrud P.L."/>
            <person name="Glass J.I."/>
        </authorList>
    </citation>
    <scope>NUCLEOTIDE SEQUENCE [LARGE SCALE GENOMIC DNA]</scope>
    <source>
        <strain>ATCC BAA-255 / R6</strain>
    </source>
</reference>
<keyword id="KW-1185">Reference proteome</keyword>
<keyword id="KW-0687">Ribonucleoprotein</keyword>
<keyword id="KW-0689">Ribosomal protein</keyword>
<keyword id="KW-0694">RNA-binding</keyword>
<keyword id="KW-0699">rRNA-binding</keyword>
<sequence>MAKPTRKRRVKKNIESGIAHIHATFNNTIVMITDVHGNAIAWSSAGALGFKGSRKSTPFAAQMASEAAAKSAQEHGLKSVEVTVKGPGSGRESAIRALAAAGLEVTAIRDVTPVPHNGARPPKRRRV</sequence>
<comment type="function">
    <text evidence="1">Located on the platform of the 30S subunit, it bridges several disparate RNA helices of the 16S rRNA. Forms part of the Shine-Dalgarno cleft in the 70S ribosome.</text>
</comment>
<comment type="subunit">
    <text evidence="1">Part of the 30S ribosomal subunit. Interacts with proteins S7 and S18. Binds to IF-3.</text>
</comment>
<comment type="similarity">
    <text evidence="1">Belongs to the universal ribosomal protein uS11 family.</text>
</comment>
<protein>
    <recommendedName>
        <fullName evidence="1">Small ribosomal subunit protein uS11</fullName>
    </recommendedName>
    <alternativeName>
        <fullName evidence="2">30S ribosomal protein S11</fullName>
    </alternativeName>
</protein>
<evidence type="ECO:0000255" key="1">
    <source>
        <dbReference type="HAMAP-Rule" id="MF_01310"/>
    </source>
</evidence>
<evidence type="ECO:0000305" key="2"/>
<dbReference type="EMBL" id="AE007317">
    <property type="protein sequence ID" value="AAK99018.1"/>
    <property type="molecule type" value="Genomic_DNA"/>
</dbReference>
<dbReference type="PIR" id="F97898">
    <property type="entry name" value="F97898"/>
</dbReference>
<dbReference type="RefSeq" id="NP_357808.1">
    <property type="nucleotide sequence ID" value="NC_003098.1"/>
</dbReference>
<dbReference type="RefSeq" id="WP_001118385.1">
    <property type="nucleotide sequence ID" value="NC_003098.1"/>
</dbReference>
<dbReference type="SMR" id="P66360"/>
<dbReference type="STRING" id="171101.spr0214"/>
<dbReference type="GeneID" id="93964226"/>
<dbReference type="KEGG" id="spr:spr0214"/>
<dbReference type="PATRIC" id="fig|171101.6.peg.246"/>
<dbReference type="eggNOG" id="COG0100">
    <property type="taxonomic scope" value="Bacteria"/>
</dbReference>
<dbReference type="HOGENOM" id="CLU_072439_5_0_9"/>
<dbReference type="PRO" id="PR:P66360"/>
<dbReference type="Proteomes" id="UP000000586">
    <property type="component" value="Chromosome"/>
</dbReference>
<dbReference type="GO" id="GO:0022627">
    <property type="term" value="C:cytosolic small ribosomal subunit"/>
    <property type="evidence" value="ECO:0000318"/>
    <property type="project" value="GO_Central"/>
</dbReference>
<dbReference type="GO" id="GO:0019843">
    <property type="term" value="F:rRNA binding"/>
    <property type="evidence" value="ECO:0007669"/>
    <property type="project" value="UniProtKB-UniRule"/>
</dbReference>
<dbReference type="GO" id="GO:0003735">
    <property type="term" value="F:structural constituent of ribosome"/>
    <property type="evidence" value="ECO:0000318"/>
    <property type="project" value="GO_Central"/>
</dbReference>
<dbReference type="GO" id="GO:0006412">
    <property type="term" value="P:translation"/>
    <property type="evidence" value="ECO:0000318"/>
    <property type="project" value="GO_Central"/>
</dbReference>
<dbReference type="FunFam" id="3.30.420.80:FF:000001">
    <property type="entry name" value="30S ribosomal protein S11"/>
    <property type="match status" value="1"/>
</dbReference>
<dbReference type="Gene3D" id="3.30.420.80">
    <property type="entry name" value="Ribosomal protein S11"/>
    <property type="match status" value="1"/>
</dbReference>
<dbReference type="HAMAP" id="MF_01310">
    <property type="entry name" value="Ribosomal_uS11"/>
    <property type="match status" value="1"/>
</dbReference>
<dbReference type="InterPro" id="IPR001971">
    <property type="entry name" value="Ribosomal_uS11"/>
</dbReference>
<dbReference type="InterPro" id="IPR019981">
    <property type="entry name" value="Ribosomal_uS11_bac-type"/>
</dbReference>
<dbReference type="InterPro" id="IPR018102">
    <property type="entry name" value="Ribosomal_uS11_CS"/>
</dbReference>
<dbReference type="InterPro" id="IPR036967">
    <property type="entry name" value="Ribosomal_uS11_sf"/>
</dbReference>
<dbReference type="NCBIfam" id="NF003698">
    <property type="entry name" value="PRK05309.1"/>
    <property type="match status" value="1"/>
</dbReference>
<dbReference type="NCBIfam" id="TIGR03632">
    <property type="entry name" value="uS11_bact"/>
    <property type="match status" value="1"/>
</dbReference>
<dbReference type="PANTHER" id="PTHR11759">
    <property type="entry name" value="40S RIBOSOMAL PROTEIN S14/30S RIBOSOMAL PROTEIN S11"/>
    <property type="match status" value="1"/>
</dbReference>
<dbReference type="Pfam" id="PF00411">
    <property type="entry name" value="Ribosomal_S11"/>
    <property type="match status" value="1"/>
</dbReference>
<dbReference type="PIRSF" id="PIRSF002131">
    <property type="entry name" value="Ribosomal_S11"/>
    <property type="match status" value="1"/>
</dbReference>
<dbReference type="SUPFAM" id="SSF53137">
    <property type="entry name" value="Translational machinery components"/>
    <property type="match status" value="1"/>
</dbReference>
<dbReference type="PROSITE" id="PS00054">
    <property type="entry name" value="RIBOSOMAL_S11"/>
    <property type="match status" value="1"/>
</dbReference>
<gene>
    <name evidence="1" type="primary">rpsK</name>
    <name type="ordered locus">spr0214</name>
</gene>
<proteinExistence type="inferred from homology"/>
<name>RS11_STRR6</name>
<organism>
    <name type="scientific">Streptococcus pneumoniae (strain ATCC BAA-255 / R6)</name>
    <dbReference type="NCBI Taxonomy" id="171101"/>
    <lineage>
        <taxon>Bacteria</taxon>
        <taxon>Bacillati</taxon>
        <taxon>Bacillota</taxon>
        <taxon>Bacilli</taxon>
        <taxon>Lactobacillales</taxon>
        <taxon>Streptococcaceae</taxon>
        <taxon>Streptococcus</taxon>
    </lineage>
</organism>